<name>STK24_RAT</name>
<sequence length="431" mass="47990">MAHSPVQSGLPGMQTLKADPEELFTKLEKIGKGSFGEVFKGIDNRTQKVVAIKIIDLEEAEDEIEDIQQEITVLSQCDSPYVTKYYGSYLKDTKLWIIMEYLGGGSALDLLEPGPLDEIQIATILREILKGLDYLHSEKKIHRDIKAANVLLSEHGEVKLADFGVAGQLTDTQIKRNTFVGTPFWMAPEVIKQSAYDSKADIWSLGITAIELAKGEPPHSELHPMKVLFLIPKNNPPTLEGSYSRPLKEFVEACLNKEPSFRPTAKELLKHKFIIRNAKKTSYLTELIDRYKRWKAEQSHEDSSSEDSDVETDSQASGGSDSGDWIFTIREKDPKNLENGTLQPSDLERNKMKDFPKRPFSQCLSTIISPLFAELKEKSQACGGNLGSIEELRGAIYLAEEACPGISDTMVAQLVQRLQRYSLSGGGASAH</sequence>
<gene>
    <name evidence="8" type="primary">Stk24</name>
    <name evidence="3" type="synonym">Mst3</name>
    <name evidence="3" type="synonym">Stk3</name>
</gene>
<protein>
    <recommendedName>
        <fullName>Serine/threonine-protein kinase 24</fullName>
        <ecNumber>2.7.11.1</ecNumber>
    </recommendedName>
    <alternativeName>
        <fullName>Mammalian STE20-like protein kinase 3</fullName>
        <shortName>MST-3</shortName>
        <shortName>MST3b</shortName>
    </alternativeName>
    <alternativeName>
        <fullName>STE20-like kinase MST3</fullName>
    </alternativeName>
    <component>
        <recommendedName>
            <fullName>Serine/threonine-protein kinase 24 35 kDa subunit</fullName>
        </recommendedName>
        <alternativeName>
            <fullName>Mammalian STE20-like protein kinase 3 N-terminal</fullName>
            <shortName>MST3/N</shortName>
        </alternativeName>
    </component>
    <component>
        <recommendedName>
            <fullName>Serine/threonine-protein kinase 24 12 kDa subunit</fullName>
        </recommendedName>
        <alternativeName>
            <fullName>Mammalian STE20-like protein kinase 3 C-terminal</fullName>
            <shortName>MST3/C</shortName>
        </alternativeName>
    </component>
</protein>
<accession>B0LT89</accession>
<accession>F1LML1</accession>
<reference key="1">
    <citation type="submission" date="2008-01" db="EMBL/GenBank/DDBJ databases">
        <title>MST3 expression in rat cardiac myocytes.</title>
        <authorList>
            <person name="Fuller S.J."/>
            <person name="Pikkarainen S.A."/>
            <person name="Clerk A."/>
            <person name="Sugden P.H."/>
        </authorList>
    </citation>
    <scope>NUCLEOTIDE SEQUENCE [MRNA]</scope>
    <source>
        <strain>Sprague-Dawley</strain>
    </source>
</reference>
<reference key="2">
    <citation type="journal article" date="2009" name="Nat. Neurosci.">
        <title>Mst3b, an Ste20-like kinase, regulates axon regeneration in mature CNS and PNS pathways.</title>
        <authorList>
            <person name="Lorber B."/>
            <person name="Howe M.L."/>
            <person name="Benowitz L.I."/>
            <person name="Irwin N."/>
        </authorList>
    </citation>
    <scope>FUNCTION</scope>
</reference>
<proteinExistence type="evidence at transcript level"/>
<feature type="initiator methionine" description="Removed" evidence="2">
    <location>
        <position position="1"/>
    </location>
</feature>
<feature type="chain" id="PRO_0000413622" description="Serine/threonine-protein kinase 24">
    <location>
        <begin position="2"/>
        <end position="431"/>
    </location>
</feature>
<feature type="chain" id="PRO_0000413623" description="Serine/threonine-protein kinase 24 35 kDa subunit" evidence="1">
    <location>
        <begin position="2"/>
        <end position="313"/>
    </location>
</feature>
<feature type="chain" id="PRO_0000413624" description="Serine/threonine-protein kinase 24 12 kDa subunit" evidence="1">
    <location>
        <begin position="314"/>
        <end position="431"/>
    </location>
</feature>
<feature type="domain" description="Protein kinase" evidence="4">
    <location>
        <begin position="24"/>
        <end position="274"/>
    </location>
</feature>
<feature type="region of interest" description="Disordered" evidence="5">
    <location>
        <begin position="297"/>
        <end position="325"/>
    </location>
</feature>
<feature type="short sequence motif" description="Bipartite nuclear localization signal" evidence="1">
    <location>
        <begin position="266"/>
        <end position="280"/>
    </location>
</feature>
<feature type="short sequence motif" description="Nuclear export signal (NES)" evidence="1">
    <location>
        <begin position="323"/>
        <end position="374"/>
    </location>
</feature>
<feature type="compositionally biased region" description="Low complexity" evidence="5">
    <location>
        <begin position="313"/>
        <end position="324"/>
    </location>
</feature>
<feature type="active site" description="Proton acceptor" evidence="4">
    <location>
        <position position="144"/>
    </location>
</feature>
<feature type="binding site" evidence="4">
    <location>
        <begin position="30"/>
        <end position="38"/>
    </location>
    <ligand>
        <name>ATP</name>
        <dbReference type="ChEBI" id="CHEBI:30616"/>
    </ligand>
</feature>
<feature type="binding site" evidence="4">
    <location>
        <position position="53"/>
    </location>
    <ligand>
        <name>ATP</name>
        <dbReference type="ChEBI" id="CHEBI:30616"/>
    </ligand>
</feature>
<feature type="binding site" evidence="4">
    <location>
        <begin position="100"/>
        <end position="102"/>
    </location>
    <ligand>
        <name>ATP</name>
        <dbReference type="ChEBI" id="CHEBI:30616"/>
    </ligand>
</feature>
<feature type="binding site" evidence="1">
    <location>
        <position position="149"/>
    </location>
    <ligand>
        <name>Mg(2+)</name>
        <dbReference type="ChEBI" id="CHEBI:18420"/>
    </ligand>
</feature>
<feature type="binding site" evidence="1">
    <location>
        <position position="162"/>
    </location>
    <ligand>
        <name>Mg(2+)</name>
        <dbReference type="ChEBI" id="CHEBI:18420"/>
    </ligand>
</feature>
<feature type="site" description="Cleavage; by caspase-3, caspase-7 and caspase-8" evidence="1">
    <location>
        <begin position="313"/>
        <end position="314"/>
    </location>
</feature>
<feature type="modified residue" description="N-acetylalanine" evidence="2">
    <location>
        <position position="2"/>
    </location>
</feature>
<feature type="modified residue" description="Phosphoserine" evidence="2">
    <location>
        <position position="4"/>
    </location>
</feature>
<feature type="modified residue" description="Phosphothreonine; by autocatalysis" evidence="3">
    <location>
        <position position="178"/>
    </location>
</feature>
<feature type="modified residue" description="Phosphoserine" evidence="3">
    <location>
        <position position="308"/>
    </location>
</feature>
<keyword id="KW-0007">Acetylation</keyword>
<keyword id="KW-0053">Apoptosis</keyword>
<keyword id="KW-0067">ATP-binding</keyword>
<keyword id="KW-0963">Cytoplasm</keyword>
<keyword id="KW-0418">Kinase</keyword>
<keyword id="KW-0460">Magnesium</keyword>
<keyword id="KW-0472">Membrane</keyword>
<keyword id="KW-0479">Metal-binding</keyword>
<keyword id="KW-0547">Nucleotide-binding</keyword>
<keyword id="KW-0539">Nucleus</keyword>
<keyword id="KW-0597">Phosphoprotein</keyword>
<keyword id="KW-1185">Reference proteome</keyword>
<keyword id="KW-0723">Serine/threonine-protein kinase</keyword>
<keyword id="KW-0808">Transferase</keyword>
<dbReference type="EC" id="2.7.11.1"/>
<dbReference type="EMBL" id="EU371958">
    <property type="protein sequence ID" value="ABY76171.1"/>
    <property type="molecule type" value="mRNA"/>
</dbReference>
<dbReference type="RefSeq" id="NP_001120966.1">
    <property type="nucleotide sequence ID" value="NM_001127494.1"/>
</dbReference>
<dbReference type="SMR" id="B0LT89"/>
<dbReference type="FunCoup" id="B0LT89">
    <property type="interactions" value="2587"/>
</dbReference>
<dbReference type="STRING" id="10116.ENSRNOP00000031981"/>
<dbReference type="iPTMnet" id="B0LT89"/>
<dbReference type="PhosphoSitePlus" id="B0LT89"/>
<dbReference type="jPOST" id="B0LT89"/>
<dbReference type="PaxDb" id="10116-ENSRNOP00000031981"/>
<dbReference type="PeptideAtlas" id="B0LT89"/>
<dbReference type="Ensembl" id="ENSRNOT00000118392.1">
    <property type="protein sequence ID" value="ENSRNOP00000078151.1"/>
    <property type="gene ID" value="ENSRNOG00000011511.8"/>
</dbReference>
<dbReference type="GeneID" id="361092"/>
<dbReference type="KEGG" id="rno:361092"/>
<dbReference type="AGR" id="RGD:1561742"/>
<dbReference type="CTD" id="8428"/>
<dbReference type="RGD" id="1561742">
    <property type="gene designation" value="Stk24"/>
</dbReference>
<dbReference type="eggNOG" id="KOG0201">
    <property type="taxonomic scope" value="Eukaryota"/>
</dbReference>
<dbReference type="GeneTree" id="ENSGT00940000153476"/>
<dbReference type="InParanoid" id="B0LT89"/>
<dbReference type="OMA" id="KFIMRNA"/>
<dbReference type="OrthoDB" id="8693905at2759"/>
<dbReference type="PhylomeDB" id="B0LT89"/>
<dbReference type="Reactome" id="R-RNO-111465">
    <property type="pathway name" value="Apoptotic cleavage of cellular proteins"/>
</dbReference>
<dbReference type="Reactome" id="R-RNO-75153">
    <property type="pathway name" value="Apoptotic execution phase"/>
</dbReference>
<dbReference type="PRO" id="PR:B0LT89"/>
<dbReference type="Proteomes" id="UP000002494">
    <property type="component" value="Chromosome 15"/>
</dbReference>
<dbReference type="GO" id="GO:0005737">
    <property type="term" value="C:cytoplasm"/>
    <property type="evidence" value="ECO:0000250"/>
    <property type="project" value="UniProtKB"/>
</dbReference>
<dbReference type="GO" id="GO:0090443">
    <property type="term" value="C:FAR/SIN/STRIPAK complex"/>
    <property type="evidence" value="ECO:0000250"/>
    <property type="project" value="UniProtKB"/>
</dbReference>
<dbReference type="GO" id="GO:0005794">
    <property type="term" value="C:Golgi apparatus"/>
    <property type="evidence" value="ECO:0000318"/>
    <property type="project" value="GO_Central"/>
</dbReference>
<dbReference type="GO" id="GO:0000139">
    <property type="term" value="C:Golgi membrane"/>
    <property type="evidence" value="ECO:0000314"/>
    <property type="project" value="UniProtKB"/>
</dbReference>
<dbReference type="GO" id="GO:0005634">
    <property type="term" value="C:nucleus"/>
    <property type="evidence" value="ECO:0000250"/>
    <property type="project" value="UniProtKB"/>
</dbReference>
<dbReference type="GO" id="GO:0005524">
    <property type="term" value="F:ATP binding"/>
    <property type="evidence" value="ECO:0007669"/>
    <property type="project" value="UniProtKB-KW"/>
</dbReference>
<dbReference type="GO" id="GO:0046872">
    <property type="term" value="F:metal ion binding"/>
    <property type="evidence" value="ECO:0007669"/>
    <property type="project" value="UniProtKB-KW"/>
</dbReference>
<dbReference type="GO" id="GO:0106310">
    <property type="term" value="F:protein serine kinase activity"/>
    <property type="evidence" value="ECO:0007669"/>
    <property type="project" value="RHEA"/>
</dbReference>
<dbReference type="GO" id="GO:0004674">
    <property type="term" value="F:protein serine/threonine kinase activity"/>
    <property type="evidence" value="ECO:0000250"/>
    <property type="project" value="UniProtKB"/>
</dbReference>
<dbReference type="GO" id="GO:0034599">
    <property type="term" value="P:cellular response to oxidative stress"/>
    <property type="evidence" value="ECO:0000266"/>
    <property type="project" value="RGD"/>
</dbReference>
<dbReference type="GO" id="GO:0009267">
    <property type="term" value="P:cellular response to starvation"/>
    <property type="evidence" value="ECO:0000250"/>
    <property type="project" value="UniProtKB"/>
</dbReference>
<dbReference type="GO" id="GO:0097194">
    <property type="term" value="P:execution phase of apoptosis"/>
    <property type="evidence" value="ECO:0000266"/>
    <property type="project" value="RGD"/>
</dbReference>
<dbReference type="GO" id="GO:0035556">
    <property type="term" value="P:intracellular signal transduction"/>
    <property type="evidence" value="ECO:0000318"/>
    <property type="project" value="GO_Central"/>
</dbReference>
<dbReference type="GO" id="GO:0008631">
    <property type="term" value="P:intrinsic apoptotic signaling pathway in response to oxidative stress"/>
    <property type="evidence" value="ECO:0000250"/>
    <property type="project" value="UniProtKB"/>
</dbReference>
<dbReference type="GO" id="GO:0030336">
    <property type="term" value="P:negative regulation of cell migration"/>
    <property type="evidence" value="ECO:0000250"/>
    <property type="project" value="UniProtKB"/>
</dbReference>
<dbReference type="GO" id="GO:0048680">
    <property type="term" value="P:positive regulation of axon regeneration"/>
    <property type="evidence" value="ECO:0000315"/>
    <property type="project" value="RGD"/>
</dbReference>
<dbReference type="GO" id="GO:0046777">
    <property type="term" value="P:protein autophosphorylation"/>
    <property type="evidence" value="ECO:0000250"/>
    <property type="project" value="UniProtKB"/>
</dbReference>
<dbReference type="GO" id="GO:0006468">
    <property type="term" value="P:protein phosphorylation"/>
    <property type="evidence" value="ECO:0000250"/>
    <property type="project" value="UniProtKB"/>
</dbReference>
<dbReference type="GO" id="GO:0048679">
    <property type="term" value="P:regulation of axon regeneration"/>
    <property type="evidence" value="ECO:0000266"/>
    <property type="project" value="RGD"/>
</dbReference>
<dbReference type="CDD" id="cd06609">
    <property type="entry name" value="STKc_MST3_like"/>
    <property type="match status" value="1"/>
</dbReference>
<dbReference type="FunFam" id="1.10.510.10:FF:000411">
    <property type="entry name" value="Probable Ste20-like kinase Don3"/>
    <property type="match status" value="1"/>
</dbReference>
<dbReference type="FunFam" id="1.10.12.70:FF:000002">
    <property type="entry name" value="Serine/threonine kinase 24"/>
    <property type="match status" value="1"/>
</dbReference>
<dbReference type="FunFam" id="3.30.200.20:FF:000252">
    <property type="entry name" value="Serine/threonine-protein kinase 26"/>
    <property type="match status" value="1"/>
</dbReference>
<dbReference type="Gene3D" id="1.10.12.70">
    <property type="match status" value="1"/>
</dbReference>
<dbReference type="Gene3D" id="3.30.200.20">
    <property type="entry name" value="Phosphorylase Kinase, domain 1"/>
    <property type="match status" value="1"/>
</dbReference>
<dbReference type="Gene3D" id="1.10.510.10">
    <property type="entry name" value="Transferase(Phosphotransferase) domain 1"/>
    <property type="match status" value="1"/>
</dbReference>
<dbReference type="InterPro" id="IPR011009">
    <property type="entry name" value="Kinase-like_dom_sf"/>
</dbReference>
<dbReference type="InterPro" id="IPR046409">
    <property type="entry name" value="PDC10_dimerisation_sf"/>
</dbReference>
<dbReference type="InterPro" id="IPR048288">
    <property type="entry name" value="PDCD10_N"/>
</dbReference>
<dbReference type="InterPro" id="IPR000719">
    <property type="entry name" value="Prot_kinase_dom"/>
</dbReference>
<dbReference type="InterPro" id="IPR017441">
    <property type="entry name" value="Protein_kinase_ATP_BS"/>
</dbReference>
<dbReference type="InterPro" id="IPR050629">
    <property type="entry name" value="STE20/SPS1-PAK"/>
</dbReference>
<dbReference type="PANTHER" id="PTHR48012:SF22">
    <property type="entry name" value="SERINE_THREONINE-PROTEIN KINASE 24"/>
    <property type="match status" value="1"/>
</dbReference>
<dbReference type="PANTHER" id="PTHR48012">
    <property type="entry name" value="STERILE20-LIKE KINASE, ISOFORM B-RELATED"/>
    <property type="match status" value="1"/>
</dbReference>
<dbReference type="Pfam" id="PF20929">
    <property type="entry name" value="PDCD10_N"/>
    <property type="match status" value="1"/>
</dbReference>
<dbReference type="Pfam" id="PF00069">
    <property type="entry name" value="Pkinase"/>
    <property type="match status" value="1"/>
</dbReference>
<dbReference type="SMART" id="SM00220">
    <property type="entry name" value="S_TKc"/>
    <property type="match status" value="1"/>
</dbReference>
<dbReference type="SUPFAM" id="SSF56112">
    <property type="entry name" value="Protein kinase-like (PK-like)"/>
    <property type="match status" value="1"/>
</dbReference>
<dbReference type="PROSITE" id="PS00107">
    <property type="entry name" value="PROTEIN_KINASE_ATP"/>
    <property type="match status" value="1"/>
</dbReference>
<dbReference type="PROSITE" id="PS50011">
    <property type="entry name" value="PROTEIN_KINASE_DOM"/>
    <property type="match status" value="1"/>
</dbReference>
<evidence type="ECO:0000250" key="1"/>
<evidence type="ECO:0000250" key="2">
    <source>
        <dbReference type="UniProtKB" id="Q99KH8"/>
    </source>
</evidence>
<evidence type="ECO:0000250" key="3">
    <source>
        <dbReference type="UniProtKB" id="Q9Y6E0"/>
    </source>
</evidence>
<evidence type="ECO:0000255" key="4">
    <source>
        <dbReference type="PROSITE-ProRule" id="PRU00159"/>
    </source>
</evidence>
<evidence type="ECO:0000256" key="5">
    <source>
        <dbReference type="SAM" id="MobiDB-lite"/>
    </source>
</evidence>
<evidence type="ECO:0000269" key="6">
    <source>
    </source>
</evidence>
<evidence type="ECO:0000305" key="7"/>
<evidence type="ECO:0000312" key="8">
    <source>
        <dbReference type="RGD" id="1561742"/>
    </source>
</evidence>
<comment type="function">
    <text evidence="3 6">Serine/threonine-protein kinase that acts on both serine and threonine residues and promotes apoptosis in response to stress stimuli and caspase activation. Mediates oxidative-stress-induced cell death by modulating phosphorylation of JNK1-JNK2 (MAPK8 and MAPK9), p38 (MAPK11, MAPK12, MAPK13 and MAPK14) during oxidative stress. Plays a role in a staurosporine-induced caspase-independent apoptotic pathway by regulating the nuclear translocation of AIFM1 and ENDOG and the DNase activity associated with ENDOG. Phosphorylates STK38L on 'Thr-442' and stimulates its kinase activity. In association with STK26 negatively regulates Golgi reorientation in polarized cell migration upon RHO activation. Also regulates cellular migration with alteration of PTPN12 activity and PXN phosphorylation: phosphorylates PTPN12 and inhibits its activity and may regulate PXN phosphorylation through PTPN12 (By similarity). May act as a key regulator of axon regeneration in the optic nerve and radial nerve (PubMed:19855390). Part of the striatin-interacting phosphatase and kinase (STRIPAK) complexes. STRIPAK complexes have critical roles in protein (de)phosphorylation and are regulators of multiple signaling pathways including Hippo, MAPK, nuclear receptor and cytoskeleton remodeling. Different types of STRIPAK complexes are involved in a variety of biological processes such as cell growth, differentiation, apoptosis, metabolism and immune regulation (By similarity).</text>
</comment>
<comment type="catalytic activity">
    <reaction>
        <text>L-seryl-[protein] + ATP = O-phospho-L-seryl-[protein] + ADP + H(+)</text>
        <dbReference type="Rhea" id="RHEA:17989"/>
        <dbReference type="Rhea" id="RHEA-COMP:9863"/>
        <dbReference type="Rhea" id="RHEA-COMP:11604"/>
        <dbReference type="ChEBI" id="CHEBI:15378"/>
        <dbReference type="ChEBI" id="CHEBI:29999"/>
        <dbReference type="ChEBI" id="CHEBI:30616"/>
        <dbReference type="ChEBI" id="CHEBI:83421"/>
        <dbReference type="ChEBI" id="CHEBI:456216"/>
        <dbReference type="EC" id="2.7.11.1"/>
    </reaction>
</comment>
<comment type="catalytic activity">
    <reaction>
        <text>L-threonyl-[protein] + ATP = O-phospho-L-threonyl-[protein] + ADP + H(+)</text>
        <dbReference type="Rhea" id="RHEA:46608"/>
        <dbReference type="Rhea" id="RHEA-COMP:11060"/>
        <dbReference type="Rhea" id="RHEA-COMP:11605"/>
        <dbReference type="ChEBI" id="CHEBI:15378"/>
        <dbReference type="ChEBI" id="CHEBI:30013"/>
        <dbReference type="ChEBI" id="CHEBI:30616"/>
        <dbReference type="ChEBI" id="CHEBI:61977"/>
        <dbReference type="ChEBI" id="CHEBI:456216"/>
        <dbReference type="EC" id="2.7.11.1"/>
    </reaction>
</comment>
<comment type="cofactor">
    <cofactor evidence="1">
        <name>Mg(2+)</name>
        <dbReference type="ChEBI" id="CHEBI:18420"/>
    </cofactor>
    <cofactor evidence="1">
        <name>Mn(2+)</name>
        <dbReference type="ChEBI" id="CHEBI:29035"/>
    </cofactor>
    <cofactor evidence="1">
        <name>Co(2+)</name>
        <dbReference type="ChEBI" id="CHEBI:48828"/>
    </cofactor>
    <cofactor evidence="1">
        <name>Zn(2+)</name>
        <dbReference type="ChEBI" id="CHEBI:29105"/>
    </cofactor>
</comment>
<comment type="subunit">
    <text evidence="3">Monomer. Interacts with CTTNBP2NL. Interacts with RIPOR1 (via C-terminus); this interaction occurs in a PDCD10-dependent and Rho-independent manner. Interacts with PDCD10; this interaction is required for the association of STK24 with RIPOR1. Part of the core of STRIPAK complexes composed of PP2A catalytic and scaffolding subunits, the striatins (PP2A regulatory subunits), the striatin-associated proteins MOB4, STRIP1 and STRIP2, PDCD10 and members of the STE20 kinases, such as STK24 and STK26.</text>
</comment>
<comment type="subcellular location">
    <subcellularLocation>
        <location evidence="1">Cytoplasm</location>
    </subcellularLocation>
    <subcellularLocation>
        <location evidence="1">Nucleus</location>
    </subcellularLocation>
    <subcellularLocation>
        <location evidence="1">Membrane</location>
    </subcellularLocation>
    <text evidence="1">The truncated form (MST3/N) translocates to the nucleus. Colocalizes with STK38L in the membrane (By similarity).</text>
</comment>
<comment type="PTM">
    <text evidence="1">Proteolytically processed by caspases during apoptosis. Proteolytic cleavage results in kinase activation, nuclear translocation of the truncated form (MST3/N) and the induction of apoptosis (By similarity).</text>
</comment>
<comment type="PTM">
    <text evidence="1">Oxidative stress induces phosphorylation. Activated by autophosphorylation at Thr-178 and phosphorylation at this site is essential for its function. Manganese, magnesium and cobalt-dependent autophosphorylation is mainly on threonine residues while zinc-dependent autophosphorylation is on both serine and threonine residues (By similarity).</text>
</comment>
<comment type="similarity">
    <text evidence="7">Belongs to the protein kinase superfamily. STE Ser/Thr protein kinase family. STE20 subfamily.</text>
</comment>
<organism>
    <name type="scientific">Rattus norvegicus</name>
    <name type="common">Rat</name>
    <dbReference type="NCBI Taxonomy" id="10116"/>
    <lineage>
        <taxon>Eukaryota</taxon>
        <taxon>Metazoa</taxon>
        <taxon>Chordata</taxon>
        <taxon>Craniata</taxon>
        <taxon>Vertebrata</taxon>
        <taxon>Euteleostomi</taxon>
        <taxon>Mammalia</taxon>
        <taxon>Eutheria</taxon>
        <taxon>Euarchontoglires</taxon>
        <taxon>Glires</taxon>
        <taxon>Rodentia</taxon>
        <taxon>Myomorpha</taxon>
        <taxon>Muroidea</taxon>
        <taxon>Muridae</taxon>
        <taxon>Murinae</taxon>
        <taxon>Rattus</taxon>
    </lineage>
</organism>